<gene>
    <name type="primary">MT-CYB</name>
    <name type="synonym">COB</name>
    <name type="synonym">CYTB</name>
    <name type="synonym">MTCYB</name>
</gene>
<accession>Q6ELV5</accession>
<geneLocation type="mitochondrion"/>
<comment type="function">
    <text evidence="2">Component of the ubiquinol-cytochrome c reductase complex (complex III or cytochrome b-c1 complex) that is part of the mitochondrial respiratory chain. The b-c1 complex mediates electron transfer from ubiquinol to cytochrome c. Contributes to the generation of a proton gradient across the mitochondrial membrane that is then used for ATP synthesis.</text>
</comment>
<comment type="cofactor">
    <cofactor evidence="2">
        <name>heme b</name>
        <dbReference type="ChEBI" id="CHEBI:60344"/>
    </cofactor>
    <text evidence="2">Binds 2 heme b groups non-covalently.</text>
</comment>
<comment type="subunit">
    <text evidence="2">The cytochrome bc1 complex contains 11 subunits: 3 respiratory subunits (MT-CYB, CYC1 and UQCRFS1), 2 core proteins (UQCRC1 and UQCRC2) and 6 low-molecular weight proteins (UQCRH/QCR6, UQCRB/QCR7, UQCRQ/QCR8, UQCR10/QCR9, UQCR11/QCR10 and a cleavage product of UQCRFS1). This cytochrome bc1 complex then forms a dimer.</text>
</comment>
<comment type="subcellular location">
    <subcellularLocation>
        <location evidence="2">Mitochondrion inner membrane</location>
        <topology evidence="2">Multi-pass membrane protein</topology>
    </subcellularLocation>
</comment>
<comment type="miscellaneous">
    <text evidence="1">Heme 1 (or BL or b562) is low-potential and absorbs at about 562 nm, and heme 2 (or BH or b566) is high-potential and absorbs at about 566 nm.</text>
</comment>
<comment type="similarity">
    <text evidence="3 4">Belongs to the cytochrome b family.</text>
</comment>
<comment type="caution">
    <text evidence="2">The full-length protein contains only eight transmembrane helices, not nine as predicted by bioinformatics tools.</text>
</comment>
<proteinExistence type="inferred from homology"/>
<evidence type="ECO:0000250" key="1"/>
<evidence type="ECO:0000250" key="2">
    <source>
        <dbReference type="UniProtKB" id="P00157"/>
    </source>
</evidence>
<evidence type="ECO:0000255" key="3">
    <source>
        <dbReference type="PROSITE-ProRule" id="PRU00967"/>
    </source>
</evidence>
<evidence type="ECO:0000255" key="4">
    <source>
        <dbReference type="PROSITE-ProRule" id="PRU00968"/>
    </source>
</evidence>
<name>CYB_LEPTO</name>
<feature type="chain" id="PRO_0000061115" description="Cytochrome b">
    <location>
        <begin position="1"/>
        <end position="379"/>
    </location>
</feature>
<feature type="transmembrane region" description="Helical" evidence="2">
    <location>
        <begin position="33"/>
        <end position="53"/>
    </location>
</feature>
<feature type="transmembrane region" description="Helical" evidence="2">
    <location>
        <begin position="77"/>
        <end position="98"/>
    </location>
</feature>
<feature type="transmembrane region" description="Helical" evidence="2">
    <location>
        <begin position="113"/>
        <end position="133"/>
    </location>
</feature>
<feature type="transmembrane region" description="Helical" evidence="2">
    <location>
        <begin position="178"/>
        <end position="198"/>
    </location>
</feature>
<feature type="transmembrane region" description="Helical" evidence="2">
    <location>
        <begin position="226"/>
        <end position="246"/>
    </location>
</feature>
<feature type="transmembrane region" description="Helical" evidence="2">
    <location>
        <begin position="288"/>
        <end position="308"/>
    </location>
</feature>
<feature type="transmembrane region" description="Helical" evidence="2">
    <location>
        <begin position="320"/>
        <end position="340"/>
    </location>
</feature>
<feature type="transmembrane region" description="Helical" evidence="2">
    <location>
        <begin position="347"/>
        <end position="367"/>
    </location>
</feature>
<feature type="binding site" description="axial binding residue" evidence="2">
    <location>
        <position position="83"/>
    </location>
    <ligand>
        <name>heme b</name>
        <dbReference type="ChEBI" id="CHEBI:60344"/>
        <label>b562</label>
    </ligand>
    <ligandPart>
        <name>Fe</name>
        <dbReference type="ChEBI" id="CHEBI:18248"/>
    </ligandPart>
</feature>
<feature type="binding site" description="axial binding residue" evidence="2">
    <location>
        <position position="97"/>
    </location>
    <ligand>
        <name>heme b</name>
        <dbReference type="ChEBI" id="CHEBI:60344"/>
        <label>b566</label>
    </ligand>
    <ligandPart>
        <name>Fe</name>
        <dbReference type="ChEBI" id="CHEBI:18248"/>
    </ligandPart>
</feature>
<feature type="binding site" description="axial binding residue" evidence="2">
    <location>
        <position position="182"/>
    </location>
    <ligand>
        <name>heme b</name>
        <dbReference type="ChEBI" id="CHEBI:60344"/>
        <label>b562</label>
    </ligand>
    <ligandPart>
        <name>Fe</name>
        <dbReference type="ChEBI" id="CHEBI:18248"/>
    </ligandPart>
</feature>
<feature type="binding site" description="axial binding residue" evidence="2">
    <location>
        <position position="196"/>
    </location>
    <ligand>
        <name>heme b</name>
        <dbReference type="ChEBI" id="CHEBI:60344"/>
        <label>b566</label>
    </ligand>
    <ligandPart>
        <name>Fe</name>
        <dbReference type="ChEBI" id="CHEBI:18248"/>
    </ligandPart>
</feature>
<feature type="binding site" evidence="2">
    <location>
        <position position="201"/>
    </location>
    <ligand>
        <name>a ubiquinone</name>
        <dbReference type="ChEBI" id="CHEBI:16389"/>
    </ligand>
</feature>
<reference key="1">
    <citation type="journal article" date="2004" name="Syst. Biol.">
        <title>A molecular supermatrix of the rabbits and hares (Leporidae) allows for the identification of five intercontinental exchanges during the Miocene.</title>
        <authorList>
            <person name="Matthee C.A."/>
            <person name="van Vuuren B.J."/>
            <person name="Bell D."/>
            <person name="Robinson T.J."/>
        </authorList>
    </citation>
    <scope>NUCLEOTIDE SEQUENCE [GENOMIC DNA]</scope>
</reference>
<protein>
    <recommendedName>
        <fullName>Cytochrome b</fullName>
    </recommendedName>
    <alternativeName>
        <fullName>Complex III subunit 3</fullName>
    </alternativeName>
    <alternativeName>
        <fullName>Complex III subunit III</fullName>
    </alternativeName>
    <alternativeName>
        <fullName>Cytochrome b-c1 complex subunit 3</fullName>
    </alternativeName>
    <alternativeName>
        <fullName>Ubiquinol-cytochrome-c reductase complex cytochrome b subunit</fullName>
    </alternativeName>
</protein>
<dbReference type="EMBL" id="AY292729">
    <property type="protein sequence ID" value="AAS54925.1"/>
    <property type="molecule type" value="Genomic_DNA"/>
</dbReference>
<dbReference type="SMR" id="Q6ELV5"/>
<dbReference type="GO" id="GO:0005743">
    <property type="term" value="C:mitochondrial inner membrane"/>
    <property type="evidence" value="ECO:0007669"/>
    <property type="project" value="UniProtKB-SubCell"/>
</dbReference>
<dbReference type="GO" id="GO:0045275">
    <property type="term" value="C:respiratory chain complex III"/>
    <property type="evidence" value="ECO:0007669"/>
    <property type="project" value="InterPro"/>
</dbReference>
<dbReference type="GO" id="GO:0046872">
    <property type="term" value="F:metal ion binding"/>
    <property type="evidence" value="ECO:0007669"/>
    <property type="project" value="UniProtKB-KW"/>
</dbReference>
<dbReference type="GO" id="GO:0008121">
    <property type="term" value="F:ubiquinol-cytochrome-c reductase activity"/>
    <property type="evidence" value="ECO:0007669"/>
    <property type="project" value="InterPro"/>
</dbReference>
<dbReference type="GO" id="GO:0006122">
    <property type="term" value="P:mitochondrial electron transport, ubiquinol to cytochrome c"/>
    <property type="evidence" value="ECO:0007669"/>
    <property type="project" value="TreeGrafter"/>
</dbReference>
<dbReference type="CDD" id="cd00290">
    <property type="entry name" value="cytochrome_b_C"/>
    <property type="match status" value="1"/>
</dbReference>
<dbReference type="CDD" id="cd00284">
    <property type="entry name" value="Cytochrome_b_N"/>
    <property type="match status" value="1"/>
</dbReference>
<dbReference type="FunFam" id="1.20.810.10:FF:000002">
    <property type="entry name" value="Cytochrome b"/>
    <property type="match status" value="1"/>
</dbReference>
<dbReference type="Gene3D" id="1.20.810.10">
    <property type="entry name" value="Cytochrome Bc1 Complex, Chain C"/>
    <property type="match status" value="1"/>
</dbReference>
<dbReference type="InterPro" id="IPR005798">
    <property type="entry name" value="Cyt_b/b6_C"/>
</dbReference>
<dbReference type="InterPro" id="IPR036150">
    <property type="entry name" value="Cyt_b/b6_C_sf"/>
</dbReference>
<dbReference type="InterPro" id="IPR005797">
    <property type="entry name" value="Cyt_b/b6_N"/>
</dbReference>
<dbReference type="InterPro" id="IPR027387">
    <property type="entry name" value="Cytb/b6-like_sf"/>
</dbReference>
<dbReference type="InterPro" id="IPR030689">
    <property type="entry name" value="Cytochrome_b"/>
</dbReference>
<dbReference type="InterPro" id="IPR048260">
    <property type="entry name" value="Cytochrome_b_C_euk/bac"/>
</dbReference>
<dbReference type="InterPro" id="IPR048259">
    <property type="entry name" value="Cytochrome_b_N_euk/bac"/>
</dbReference>
<dbReference type="InterPro" id="IPR016174">
    <property type="entry name" value="Di-haem_cyt_TM"/>
</dbReference>
<dbReference type="PANTHER" id="PTHR19271">
    <property type="entry name" value="CYTOCHROME B"/>
    <property type="match status" value="1"/>
</dbReference>
<dbReference type="PANTHER" id="PTHR19271:SF16">
    <property type="entry name" value="CYTOCHROME B"/>
    <property type="match status" value="1"/>
</dbReference>
<dbReference type="Pfam" id="PF00032">
    <property type="entry name" value="Cytochrom_B_C"/>
    <property type="match status" value="1"/>
</dbReference>
<dbReference type="Pfam" id="PF00033">
    <property type="entry name" value="Cytochrome_B"/>
    <property type="match status" value="1"/>
</dbReference>
<dbReference type="PIRSF" id="PIRSF038885">
    <property type="entry name" value="COB"/>
    <property type="match status" value="1"/>
</dbReference>
<dbReference type="SUPFAM" id="SSF81648">
    <property type="entry name" value="a domain/subunit of cytochrome bc1 complex (Ubiquinol-cytochrome c reductase)"/>
    <property type="match status" value="1"/>
</dbReference>
<dbReference type="SUPFAM" id="SSF81342">
    <property type="entry name" value="Transmembrane di-heme cytochromes"/>
    <property type="match status" value="1"/>
</dbReference>
<dbReference type="PROSITE" id="PS51003">
    <property type="entry name" value="CYTB_CTER"/>
    <property type="match status" value="1"/>
</dbReference>
<dbReference type="PROSITE" id="PS51002">
    <property type="entry name" value="CYTB_NTER"/>
    <property type="match status" value="1"/>
</dbReference>
<organism>
    <name type="scientific">Lepus townsendii</name>
    <name type="common">White-tailed jackrabbit</name>
    <dbReference type="NCBI Taxonomy" id="63225"/>
    <lineage>
        <taxon>Eukaryota</taxon>
        <taxon>Metazoa</taxon>
        <taxon>Chordata</taxon>
        <taxon>Craniata</taxon>
        <taxon>Vertebrata</taxon>
        <taxon>Euteleostomi</taxon>
        <taxon>Mammalia</taxon>
        <taxon>Eutheria</taxon>
        <taxon>Euarchontoglires</taxon>
        <taxon>Glires</taxon>
        <taxon>Lagomorpha</taxon>
        <taxon>Leporidae</taxon>
        <taxon>Lepus</taxon>
    </lineage>
</organism>
<keyword id="KW-0249">Electron transport</keyword>
<keyword id="KW-0349">Heme</keyword>
<keyword id="KW-0408">Iron</keyword>
<keyword id="KW-0472">Membrane</keyword>
<keyword id="KW-0479">Metal-binding</keyword>
<keyword id="KW-0496">Mitochondrion</keyword>
<keyword id="KW-0999">Mitochondrion inner membrane</keyword>
<keyword id="KW-0679">Respiratory chain</keyword>
<keyword id="KW-0812">Transmembrane</keyword>
<keyword id="KW-1133">Transmembrane helix</keyword>
<keyword id="KW-0813">Transport</keyword>
<keyword id="KW-0830">Ubiquinone</keyword>
<sequence length="379" mass="42753">MTNIRKTPPLLKIVNHSLIDLPAPSNISAWWNFGSLLGLCLMIQILTGLFLAMHYTSDTATAFSSVTHICRDVNYGWLIRYLHANGASMFFICLYMHVGRGIYYGSYTYLETWNIGIILLFAVMATAFMGYVLPWGQMSFWGATVITNLLSAIPYIGTTLVEWIWGGFSVDKATLTRFFAFHFILPFIIAALVMIHLLFLHETGSNNPSGIPSDSDKIPFHPYYTIKDLLGFLVLILLLMLLVLFSPDLLGDPDNYTPANPLNTPPHIKPEWYFLFAYAILRSIPNKLGGVLALVMSILILAIIPFLHMSKQRSMMFRPISQVLFWILVADLLTLTWIGGQPVEHPFITIGQVASILYFSIILILMPLASLIENKILKW</sequence>